<evidence type="ECO:0000250" key="1"/>
<evidence type="ECO:0000255" key="2">
    <source>
        <dbReference type="HAMAP-Rule" id="MF_00100"/>
    </source>
</evidence>
<evidence type="ECO:0000256" key="3">
    <source>
        <dbReference type="SAM" id="MobiDB-lite"/>
    </source>
</evidence>
<keyword id="KW-0963">Cytoplasm</keyword>
<keyword id="KW-0342">GTP-binding</keyword>
<keyword id="KW-0396">Initiation factor</keyword>
<keyword id="KW-0547">Nucleotide-binding</keyword>
<keyword id="KW-0648">Protein biosynthesis</keyword>
<keyword id="KW-1185">Reference proteome</keyword>
<accession>A6LHS1</accession>
<protein>
    <recommendedName>
        <fullName evidence="2">Translation initiation factor IF-2</fullName>
    </recommendedName>
</protein>
<dbReference type="EMBL" id="CP000140">
    <property type="protein sequence ID" value="ABR45235.1"/>
    <property type="molecule type" value="Genomic_DNA"/>
</dbReference>
<dbReference type="RefSeq" id="WP_005859394.1">
    <property type="nucleotide sequence ID" value="NZ_LR215978.1"/>
</dbReference>
<dbReference type="SMR" id="A6LHS1"/>
<dbReference type="STRING" id="435591.BDI_3534"/>
<dbReference type="PaxDb" id="435591-BDI_3534"/>
<dbReference type="KEGG" id="pdi:BDI_3534"/>
<dbReference type="eggNOG" id="COG0532">
    <property type="taxonomic scope" value="Bacteria"/>
</dbReference>
<dbReference type="HOGENOM" id="CLU_006301_0_0_10"/>
<dbReference type="BioCyc" id="PDIS435591:G1G5A-3626-MONOMER"/>
<dbReference type="Proteomes" id="UP000000566">
    <property type="component" value="Chromosome"/>
</dbReference>
<dbReference type="GO" id="GO:0005737">
    <property type="term" value="C:cytoplasm"/>
    <property type="evidence" value="ECO:0007669"/>
    <property type="project" value="UniProtKB-SubCell"/>
</dbReference>
<dbReference type="GO" id="GO:0005525">
    <property type="term" value="F:GTP binding"/>
    <property type="evidence" value="ECO:0007669"/>
    <property type="project" value="UniProtKB-KW"/>
</dbReference>
<dbReference type="GO" id="GO:0003924">
    <property type="term" value="F:GTPase activity"/>
    <property type="evidence" value="ECO:0007669"/>
    <property type="project" value="UniProtKB-UniRule"/>
</dbReference>
<dbReference type="GO" id="GO:0003743">
    <property type="term" value="F:translation initiation factor activity"/>
    <property type="evidence" value="ECO:0007669"/>
    <property type="project" value="UniProtKB-UniRule"/>
</dbReference>
<dbReference type="CDD" id="cd01887">
    <property type="entry name" value="IF2_eIF5B"/>
    <property type="match status" value="1"/>
</dbReference>
<dbReference type="CDD" id="cd03702">
    <property type="entry name" value="IF2_mtIF2_II"/>
    <property type="match status" value="1"/>
</dbReference>
<dbReference type="CDD" id="cd03692">
    <property type="entry name" value="mtIF2_IVc"/>
    <property type="match status" value="1"/>
</dbReference>
<dbReference type="FunFam" id="2.40.30.10:FF:000007">
    <property type="entry name" value="Translation initiation factor IF-2"/>
    <property type="match status" value="1"/>
</dbReference>
<dbReference type="FunFam" id="2.40.30.10:FF:000008">
    <property type="entry name" value="Translation initiation factor IF-2"/>
    <property type="match status" value="1"/>
</dbReference>
<dbReference type="FunFam" id="3.40.50.10050:FF:000001">
    <property type="entry name" value="Translation initiation factor IF-2"/>
    <property type="match status" value="1"/>
</dbReference>
<dbReference type="FunFam" id="3.40.50.300:FF:000019">
    <property type="entry name" value="Translation initiation factor IF-2"/>
    <property type="match status" value="1"/>
</dbReference>
<dbReference type="Gene3D" id="3.40.50.300">
    <property type="entry name" value="P-loop containing nucleotide triphosphate hydrolases"/>
    <property type="match status" value="1"/>
</dbReference>
<dbReference type="Gene3D" id="2.40.30.10">
    <property type="entry name" value="Translation factors"/>
    <property type="match status" value="2"/>
</dbReference>
<dbReference type="Gene3D" id="3.40.50.10050">
    <property type="entry name" value="Translation initiation factor IF- 2, domain 3"/>
    <property type="match status" value="1"/>
</dbReference>
<dbReference type="HAMAP" id="MF_00100_B">
    <property type="entry name" value="IF_2_B"/>
    <property type="match status" value="1"/>
</dbReference>
<dbReference type="InterPro" id="IPR053905">
    <property type="entry name" value="EF-G-like_DII"/>
</dbReference>
<dbReference type="InterPro" id="IPR004161">
    <property type="entry name" value="EFTu-like_2"/>
</dbReference>
<dbReference type="InterPro" id="IPR044145">
    <property type="entry name" value="IF2_II"/>
</dbReference>
<dbReference type="InterPro" id="IPR006847">
    <property type="entry name" value="IF2_N"/>
</dbReference>
<dbReference type="InterPro" id="IPR027417">
    <property type="entry name" value="P-loop_NTPase"/>
</dbReference>
<dbReference type="InterPro" id="IPR005225">
    <property type="entry name" value="Small_GTP-bd"/>
</dbReference>
<dbReference type="InterPro" id="IPR000795">
    <property type="entry name" value="T_Tr_GTP-bd_dom"/>
</dbReference>
<dbReference type="InterPro" id="IPR000178">
    <property type="entry name" value="TF_IF2_bacterial-like"/>
</dbReference>
<dbReference type="InterPro" id="IPR015760">
    <property type="entry name" value="TIF_IF2"/>
</dbReference>
<dbReference type="InterPro" id="IPR023115">
    <property type="entry name" value="TIF_IF2_dom3"/>
</dbReference>
<dbReference type="InterPro" id="IPR036925">
    <property type="entry name" value="TIF_IF2_dom3_sf"/>
</dbReference>
<dbReference type="InterPro" id="IPR009000">
    <property type="entry name" value="Transl_B-barrel_sf"/>
</dbReference>
<dbReference type="NCBIfam" id="TIGR00487">
    <property type="entry name" value="IF-2"/>
    <property type="match status" value="1"/>
</dbReference>
<dbReference type="NCBIfam" id="TIGR00231">
    <property type="entry name" value="small_GTP"/>
    <property type="match status" value="1"/>
</dbReference>
<dbReference type="PANTHER" id="PTHR43381:SF5">
    <property type="entry name" value="TR-TYPE G DOMAIN-CONTAINING PROTEIN"/>
    <property type="match status" value="1"/>
</dbReference>
<dbReference type="PANTHER" id="PTHR43381">
    <property type="entry name" value="TRANSLATION INITIATION FACTOR IF-2-RELATED"/>
    <property type="match status" value="1"/>
</dbReference>
<dbReference type="Pfam" id="PF22042">
    <property type="entry name" value="EF-G_D2"/>
    <property type="match status" value="1"/>
</dbReference>
<dbReference type="Pfam" id="PF00009">
    <property type="entry name" value="GTP_EFTU"/>
    <property type="match status" value="1"/>
</dbReference>
<dbReference type="Pfam" id="PF03144">
    <property type="entry name" value="GTP_EFTU_D2"/>
    <property type="match status" value="1"/>
</dbReference>
<dbReference type="Pfam" id="PF11987">
    <property type="entry name" value="IF-2"/>
    <property type="match status" value="1"/>
</dbReference>
<dbReference type="Pfam" id="PF04760">
    <property type="entry name" value="IF2_N"/>
    <property type="match status" value="1"/>
</dbReference>
<dbReference type="SUPFAM" id="SSF52156">
    <property type="entry name" value="Initiation factor IF2/eIF5b, domain 3"/>
    <property type="match status" value="1"/>
</dbReference>
<dbReference type="SUPFAM" id="SSF52540">
    <property type="entry name" value="P-loop containing nucleoside triphosphate hydrolases"/>
    <property type="match status" value="1"/>
</dbReference>
<dbReference type="SUPFAM" id="SSF50447">
    <property type="entry name" value="Translation proteins"/>
    <property type="match status" value="2"/>
</dbReference>
<dbReference type="PROSITE" id="PS51722">
    <property type="entry name" value="G_TR_2"/>
    <property type="match status" value="1"/>
</dbReference>
<dbReference type="PROSITE" id="PS01176">
    <property type="entry name" value="IF2"/>
    <property type="match status" value="1"/>
</dbReference>
<organism>
    <name type="scientific">Parabacteroides distasonis (strain ATCC 8503 / DSM 20701 / CIP 104284 / JCM 5825 / NCTC 11152)</name>
    <dbReference type="NCBI Taxonomy" id="435591"/>
    <lineage>
        <taxon>Bacteria</taxon>
        <taxon>Pseudomonadati</taxon>
        <taxon>Bacteroidota</taxon>
        <taxon>Bacteroidia</taxon>
        <taxon>Bacteroidales</taxon>
        <taxon>Tannerellaceae</taxon>
        <taxon>Parabacteroides</taxon>
    </lineage>
</organism>
<sequence>MPIKLIQVQRKLNVGINTVVEFLHRNGFSVEDNPNTRISDEQYALLVKEFGKDLPEKDRNFAADRMRKEVPSVKEEKTAEIKTVIPEEFRPKIVMKGHIDLDGGQHKKQQEEPKAKEEPKVKEEPKVKEEPKVKEAPAAPAAQAPVKPAQPAQAPTEKKEEKVIVVEVEKEKTVEKQPVVAEPKVESVKPEQEVEKTEEKDDNLFRLNSVKLESKIKVTGKIDLDALNQSTRPKKKTKEEKRKERDEKQKFNNNRPGNNSNGPGAPHKSPNSPTLIKPNAPAKPGEEGDAKKKRKRIKKDRVDVNNTPGTNYPRPNRDDRPNNDRKPRLKKPVKAEVSEEDVQKQIKETLARLTNKNNKNNKGAKYRRDKRDAAVKREHELMEQEELESKVLKLTEFVTANDLANMMDVSVTEVIGTCMSIGLMVSINQRLDAETINIVAEEFGYKTEYVSADVVEAINADEEDDNEEDWVARPPIVTVMGHVDHGKTSLLDNIRSANVIAGEAGGITQHIGAYNVKLQNGRRITFLDTPGHEAFTAMRARGAKVTDIAIIIVAADDNVMPQTIEAINHASAAGVPIVFAINKIDKPHANPEKIKEELANMNYLVEDWGGKYQSQEISAKKGIGVEELLEKVLLEADLLDLKANPKKRAVGSIIESSLDKGRGYVSTILVENGTLKMGDIVLAGTHQGRIKAMFNERNQRVEKAGPSEPVLILGLNGAPQAGDTFNVLETEQEAREIANRREQLQRELGLRTQKMLTLDDIGRRIAVGNFQELNVIVKGDVDGSVEALSDSLIRLSTEEIQVNVIHKAVGQISESDVVLAAASNAIIIGFQVRPSLQARRNAEKEGVEIRLYSIIYDAIEEVKSAMEGMLSPEIKEEITAYVEVQQVFKITKVGTVAGCMVKEGKIKRTNKIRLIRDGIVIYAGELGSLKRFKDDAKEVVAGLDCGLNITNFNDIQVGDMIEAYEETEIKKTL</sequence>
<reference key="1">
    <citation type="journal article" date="2007" name="PLoS Biol.">
        <title>Evolution of symbiotic bacteria in the distal human intestine.</title>
        <authorList>
            <person name="Xu J."/>
            <person name="Mahowald M.A."/>
            <person name="Ley R.E."/>
            <person name="Lozupone C.A."/>
            <person name="Hamady M."/>
            <person name="Martens E.C."/>
            <person name="Henrissat B."/>
            <person name="Coutinho P.M."/>
            <person name="Minx P."/>
            <person name="Latreille P."/>
            <person name="Cordum H."/>
            <person name="Van Brunt A."/>
            <person name="Kim K."/>
            <person name="Fulton R.S."/>
            <person name="Fulton L.A."/>
            <person name="Clifton S.W."/>
            <person name="Wilson R.K."/>
            <person name="Knight R.D."/>
            <person name="Gordon J.I."/>
        </authorList>
    </citation>
    <scope>NUCLEOTIDE SEQUENCE [LARGE SCALE GENOMIC DNA]</scope>
    <source>
        <strain>ATCC 8503 / DSM 20701 / CIP 104284 / JCM 5825 / NCTC 11152</strain>
    </source>
</reference>
<name>IF2_PARD8</name>
<comment type="function">
    <text evidence="2">One of the essential components for the initiation of protein synthesis. Protects formylmethionyl-tRNA from spontaneous hydrolysis and promotes its binding to the 30S ribosomal subunits. Also involved in the hydrolysis of GTP during the formation of the 70S ribosomal complex.</text>
</comment>
<comment type="subcellular location">
    <subcellularLocation>
        <location evidence="2">Cytoplasm</location>
    </subcellularLocation>
</comment>
<comment type="similarity">
    <text evidence="2">Belongs to the TRAFAC class translation factor GTPase superfamily. Classic translation factor GTPase family. IF-2 subfamily.</text>
</comment>
<gene>
    <name evidence="2" type="primary">infB</name>
    <name type="ordered locus">BDI_3534</name>
</gene>
<feature type="chain" id="PRO_1000008292" description="Translation initiation factor IF-2">
    <location>
        <begin position="1"/>
        <end position="973"/>
    </location>
</feature>
<feature type="domain" description="tr-type G">
    <location>
        <begin position="472"/>
        <end position="642"/>
    </location>
</feature>
<feature type="region of interest" description="Disordered" evidence="3">
    <location>
        <begin position="97"/>
        <end position="343"/>
    </location>
</feature>
<feature type="region of interest" description="Disordered" evidence="3">
    <location>
        <begin position="353"/>
        <end position="372"/>
    </location>
</feature>
<feature type="region of interest" description="G1" evidence="1">
    <location>
        <begin position="481"/>
        <end position="488"/>
    </location>
</feature>
<feature type="region of interest" description="G2" evidence="1">
    <location>
        <begin position="506"/>
        <end position="510"/>
    </location>
</feature>
<feature type="region of interest" description="G3" evidence="1">
    <location>
        <begin position="528"/>
        <end position="531"/>
    </location>
</feature>
<feature type="region of interest" description="G4" evidence="1">
    <location>
        <begin position="582"/>
        <end position="585"/>
    </location>
</feature>
<feature type="region of interest" description="G5" evidence="1">
    <location>
        <begin position="618"/>
        <end position="620"/>
    </location>
</feature>
<feature type="compositionally biased region" description="Basic and acidic residues" evidence="3">
    <location>
        <begin position="97"/>
        <end position="135"/>
    </location>
</feature>
<feature type="compositionally biased region" description="Low complexity" evidence="3">
    <location>
        <begin position="136"/>
        <end position="155"/>
    </location>
</feature>
<feature type="compositionally biased region" description="Basic and acidic residues" evidence="3">
    <location>
        <begin position="156"/>
        <end position="175"/>
    </location>
</feature>
<feature type="compositionally biased region" description="Basic and acidic residues" evidence="3">
    <location>
        <begin position="183"/>
        <end position="204"/>
    </location>
</feature>
<feature type="compositionally biased region" description="Basic and acidic residues" evidence="3">
    <location>
        <begin position="212"/>
        <end position="224"/>
    </location>
</feature>
<feature type="compositionally biased region" description="Basic and acidic residues" evidence="3">
    <location>
        <begin position="237"/>
        <end position="250"/>
    </location>
</feature>
<feature type="compositionally biased region" description="Low complexity" evidence="3">
    <location>
        <begin position="252"/>
        <end position="266"/>
    </location>
</feature>
<feature type="compositionally biased region" description="Basic and acidic residues" evidence="3">
    <location>
        <begin position="315"/>
        <end position="326"/>
    </location>
</feature>
<feature type="compositionally biased region" description="Basic and acidic residues" evidence="3">
    <location>
        <begin position="333"/>
        <end position="343"/>
    </location>
</feature>
<feature type="binding site" evidence="2">
    <location>
        <begin position="481"/>
        <end position="488"/>
    </location>
    <ligand>
        <name>GTP</name>
        <dbReference type="ChEBI" id="CHEBI:37565"/>
    </ligand>
</feature>
<feature type="binding site" evidence="2">
    <location>
        <begin position="528"/>
        <end position="532"/>
    </location>
    <ligand>
        <name>GTP</name>
        <dbReference type="ChEBI" id="CHEBI:37565"/>
    </ligand>
</feature>
<feature type="binding site" evidence="2">
    <location>
        <begin position="582"/>
        <end position="585"/>
    </location>
    <ligand>
        <name>GTP</name>
        <dbReference type="ChEBI" id="CHEBI:37565"/>
    </ligand>
</feature>
<proteinExistence type="inferred from homology"/>